<evidence type="ECO:0000255" key="1">
    <source>
        <dbReference type="HAMAP-Rule" id="MF_00419"/>
    </source>
</evidence>
<evidence type="ECO:0000256" key="2">
    <source>
        <dbReference type="SAM" id="MobiDB-lite"/>
    </source>
</evidence>
<evidence type="ECO:0000305" key="3"/>
<keyword id="KW-0067">ATP-binding</keyword>
<keyword id="KW-0963">Cytoplasm</keyword>
<keyword id="KW-0315">Glutamine amidotransferase</keyword>
<keyword id="KW-0436">Ligase</keyword>
<keyword id="KW-0460">Magnesium</keyword>
<keyword id="KW-0479">Metal-binding</keyword>
<keyword id="KW-0547">Nucleotide-binding</keyword>
<keyword id="KW-0658">Purine biosynthesis</keyword>
<accession>Q1C5E7</accession>
<reference key="1">
    <citation type="journal article" date="2006" name="J. Bacteriol.">
        <title>Complete genome sequence of Yersinia pestis strains Antiqua and Nepal516: evidence of gene reduction in an emerging pathogen.</title>
        <authorList>
            <person name="Chain P.S.G."/>
            <person name="Hu P."/>
            <person name="Malfatti S.A."/>
            <person name="Radnedge L."/>
            <person name="Larimer F."/>
            <person name="Vergez L.M."/>
            <person name="Worsham P."/>
            <person name="Chu M.C."/>
            <person name="Andersen G.L."/>
        </authorList>
    </citation>
    <scope>NUCLEOTIDE SEQUENCE [LARGE SCALE GENOMIC DNA]</scope>
    <source>
        <strain>Antiqua</strain>
    </source>
</reference>
<protein>
    <recommendedName>
        <fullName evidence="1">Phosphoribosylformylglycinamidine synthase</fullName>
        <shortName evidence="1">FGAM synthase</shortName>
        <shortName evidence="1">FGAMS</shortName>
        <ecNumber evidence="1">6.3.5.3</ecNumber>
    </recommendedName>
    <alternativeName>
        <fullName evidence="1">Formylglycinamide ribonucleotide amidotransferase</fullName>
        <shortName evidence="1">FGAR amidotransferase</shortName>
        <shortName evidence="1">FGAR-AT</shortName>
    </alternativeName>
</protein>
<name>PUR4_YERPA</name>
<proteinExistence type="inferred from homology"/>
<comment type="function">
    <text evidence="1">Phosphoribosylformylglycinamidine synthase involved in the purines biosynthetic pathway. Catalyzes the ATP-dependent conversion of formylglycinamide ribonucleotide (FGAR) and glutamine to yield formylglycinamidine ribonucleotide (FGAM) and glutamate.</text>
</comment>
<comment type="catalytic activity">
    <reaction evidence="1">
        <text>N(2)-formyl-N(1)-(5-phospho-beta-D-ribosyl)glycinamide + L-glutamine + ATP + H2O = 2-formamido-N(1)-(5-O-phospho-beta-D-ribosyl)acetamidine + L-glutamate + ADP + phosphate + H(+)</text>
        <dbReference type="Rhea" id="RHEA:17129"/>
        <dbReference type="ChEBI" id="CHEBI:15377"/>
        <dbReference type="ChEBI" id="CHEBI:15378"/>
        <dbReference type="ChEBI" id="CHEBI:29985"/>
        <dbReference type="ChEBI" id="CHEBI:30616"/>
        <dbReference type="ChEBI" id="CHEBI:43474"/>
        <dbReference type="ChEBI" id="CHEBI:58359"/>
        <dbReference type="ChEBI" id="CHEBI:147286"/>
        <dbReference type="ChEBI" id="CHEBI:147287"/>
        <dbReference type="ChEBI" id="CHEBI:456216"/>
        <dbReference type="EC" id="6.3.5.3"/>
    </reaction>
</comment>
<comment type="pathway">
    <text evidence="1">Purine metabolism; IMP biosynthesis via de novo pathway; 5-amino-1-(5-phospho-D-ribosyl)imidazole from N(2)-formyl-N(1)-(5-phospho-D-ribosyl)glycinamide: step 1/2.</text>
</comment>
<comment type="subunit">
    <text evidence="1">Monomer.</text>
</comment>
<comment type="subcellular location">
    <subcellularLocation>
        <location evidence="1">Cytoplasm</location>
    </subcellularLocation>
</comment>
<comment type="similarity">
    <text evidence="1">In the N-terminal section; belongs to the FGAMS family.</text>
</comment>
<comment type="sequence caution" evidence="3">
    <conflict type="erroneous initiation">
        <sequence resource="EMBL-CDS" id="ABG14325"/>
    </conflict>
    <text>Truncated N-terminus.</text>
</comment>
<gene>
    <name evidence="1" type="primary">purL</name>
    <name type="ordered locus">YPA_2360</name>
</gene>
<feature type="chain" id="PRO_0000264602" description="Phosphoribosylformylglycinamidine synthase">
    <location>
        <begin position="1"/>
        <end position="1296"/>
    </location>
</feature>
<feature type="domain" description="Glutamine amidotransferase type-1" evidence="1">
    <location>
        <begin position="1043"/>
        <end position="1296"/>
    </location>
</feature>
<feature type="region of interest" description="Disordered" evidence="2">
    <location>
        <begin position="304"/>
        <end position="323"/>
    </location>
</feature>
<feature type="region of interest" description="Disordered" evidence="2">
    <location>
        <begin position="1000"/>
        <end position="1019"/>
    </location>
</feature>
<feature type="compositionally biased region" description="Basic and acidic residues" evidence="2">
    <location>
        <begin position="1000"/>
        <end position="1013"/>
    </location>
</feature>
<feature type="active site" description="Nucleophile" evidence="1">
    <location>
        <position position="1136"/>
    </location>
</feature>
<feature type="active site" evidence="1">
    <location>
        <position position="1261"/>
    </location>
</feature>
<feature type="active site" evidence="1">
    <location>
        <position position="1263"/>
    </location>
</feature>
<feature type="binding site" evidence="1">
    <location>
        <begin position="306"/>
        <end position="317"/>
    </location>
    <ligand>
        <name>ATP</name>
        <dbReference type="ChEBI" id="CHEBI:30616"/>
    </ligand>
</feature>
<feature type="binding site" evidence="1">
    <location>
        <position position="677"/>
    </location>
    <ligand>
        <name>ATP</name>
        <dbReference type="ChEBI" id="CHEBI:30616"/>
    </ligand>
</feature>
<feature type="binding site" evidence="1">
    <location>
        <position position="678"/>
    </location>
    <ligand>
        <name>Mg(2+)</name>
        <dbReference type="ChEBI" id="CHEBI:18420"/>
    </ligand>
</feature>
<feature type="binding site" evidence="1">
    <location>
        <position position="717"/>
    </location>
    <ligand>
        <name>Mg(2+)</name>
        <dbReference type="ChEBI" id="CHEBI:18420"/>
    </ligand>
</feature>
<feature type="binding site" evidence="1">
    <location>
        <position position="721"/>
    </location>
    <ligand>
        <name>Mg(2+)</name>
        <dbReference type="ChEBI" id="CHEBI:18420"/>
    </ligand>
</feature>
<feature type="binding site" evidence="1">
    <location>
        <position position="885"/>
    </location>
    <ligand>
        <name>Mg(2+)</name>
        <dbReference type="ChEBI" id="CHEBI:18420"/>
    </ligand>
</feature>
<feature type="binding site" evidence="1">
    <location>
        <position position="887"/>
    </location>
    <ligand>
        <name>ATP</name>
        <dbReference type="ChEBI" id="CHEBI:30616"/>
    </ligand>
</feature>
<organism>
    <name type="scientific">Yersinia pestis bv. Antiqua (strain Antiqua)</name>
    <dbReference type="NCBI Taxonomy" id="360102"/>
    <lineage>
        <taxon>Bacteria</taxon>
        <taxon>Pseudomonadati</taxon>
        <taxon>Pseudomonadota</taxon>
        <taxon>Gammaproteobacteria</taxon>
        <taxon>Enterobacterales</taxon>
        <taxon>Yersiniaceae</taxon>
        <taxon>Yersinia</taxon>
    </lineage>
</organism>
<dbReference type="EC" id="6.3.5.3" evidence="1"/>
<dbReference type="EMBL" id="CP000308">
    <property type="protein sequence ID" value="ABG14325.1"/>
    <property type="status" value="ALT_INIT"/>
    <property type="molecule type" value="Genomic_DNA"/>
</dbReference>
<dbReference type="RefSeq" id="WP_002211561.1">
    <property type="nucleotide sequence ID" value="NZ_CP009906.1"/>
</dbReference>
<dbReference type="SMR" id="Q1C5E7"/>
<dbReference type="GeneID" id="57975875"/>
<dbReference type="KEGG" id="ypa:YPA_2360"/>
<dbReference type="UniPathway" id="UPA00074">
    <property type="reaction ID" value="UER00128"/>
</dbReference>
<dbReference type="Proteomes" id="UP000001971">
    <property type="component" value="Chromosome"/>
</dbReference>
<dbReference type="GO" id="GO:0005737">
    <property type="term" value="C:cytoplasm"/>
    <property type="evidence" value="ECO:0007669"/>
    <property type="project" value="UniProtKB-SubCell"/>
</dbReference>
<dbReference type="GO" id="GO:0005524">
    <property type="term" value="F:ATP binding"/>
    <property type="evidence" value="ECO:0007669"/>
    <property type="project" value="UniProtKB-UniRule"/>
</dbReference>
<dbReference type="GO" id="GO:0046872">
    <property type="term" value="F:metal ion binding"/>
    <property type="evidence" value="ECO:0007669"/>
    <property type="project" value="UniProtKB-KW"/>
</dbReference>
<dbReference type="GO" id="GO:0004642">
    <property type="term" value="F:phosphoribosylformylglycinamidine synthase activity"/>
    <property type="evidence" value="ECO:0007669"/>
    <property type="project" value="UniProtKB-UniRule"/>
</dbReference>
<dbReference type="GO" id="GO:0006189">
    <property type="term" value="P:'de novo' IMP biosynthetic process"/>
    <property type="evidence" value="ECO:0007669"/>
    <property type="project" value="UniProtKB-UniRule"/>
</dbReference>
<dbReference type="CDD" id="cd01740">
    <property type="entry name" value="GATase1_FGAR_AT"/>
    <property type="match status" value="1"/>
</dbReference>
<dbReference type="CDD" id="cd02203">
    <property type="entry name" value="PurL_repeat1"/>
    <property type="match status" value="1"/>
</dbReference>
<dbReference type="FunFam" id="1.10.8.750:FF:000002">
    <property type="entry name" value="Phosphoribosylformylglycinamidine synthase"/>
    <property type="match status" value="1"/>
</dbReference>
<dbReference type="FunFam" id="3.30.1330.10:FF:000002">
    <property type="entry name" value="Phosphoribosylformylglycinamidine synthase"/>
    <property type="match status" value="1"/>
</dbReference>
<dbReference type="FunFam" id="3.30.1330.10:FF:000005">
    <property type="entry name" value="Phosphoribosylformylglycinamidine synthase"/>
    <property type="match status" value="1"/>
</dbReference>
<dbReference type="FunFam" id="3.40.50.880:FF:000008">
    <property type="entry name" value="Phosphoribosylformylglycinamidine synthase"/>
    <property type="match status" value="1"/>
</dbReference>
<dbReference type="FunFam" id="3.90.650.10:FF:000002">
    <property type="entry name" value="Phosphoribosylformylglycinamidine synthase"/>
    <property type="match status" value="1"/>
</dbReference>
<dbReference type="FunFam" id="3.90.650.10:FF:000005">
    <property type="entry name" value="Phosphoribosylformylglycinamidine synthase"/>
    <property type="match status" value="1"/>
</dbReference>
<dbReference type="Gene3D" id="3.40.50.880">
    <property type="match status" value="1"/>
</dbReference>
<dbReference type="Gene3D" id="1.10.8.750">
    <property type="entry name" value="Phosphoribosylformylglycinamidine synthase, linker domain"/>
    <property type="match status" value="1"/>
</dbReference>
<dbReference type="Gene3D" id="3.90.650.10">
    <property type="entry name" value="PurM-like C-terminal domain"/>
    <property type="match status" value="2"/>
</dbReference>
<dbReference type="Gene3D" id="3.30.1330.10">
    <property type="entry name" value="PurM-like, N-terminal domain"/>
    <property type="match status" value="2"/>
</dbReference>
<dbReference type="HAMAP" id="MF_00419">
    <property type="entry name" value="PurL_1"/>
    <property type="match status" value="1"/>
</dbReference>
<dbReference type="InterPro" id="IPR029062">
    <property type="entry name" value="Class_I_gatase-like"/>
</dbReference>
<dbReference type="InterPro" id="IPR040707">
    <property type="entry name" value="FGAR-AT_N"/>
</dbReference>
<dbReference type="InterPro" id="IPR055181">
    <property type="entry name" value="FGAR-AT_PurM_N-like"/>
</dbReference>
<dbReference type="InterPro" id="IPR010073">
    <property type="entry name" value="PurL_large"/>
</dbReference>
<dbReference type="InterPro" id="IPR041609">
    <property type="entry name" value="PurL_linker"/>
</dbReference>
<dbReference type="InterPro" id="IPR010918">
    <property type="entry name" value="PurM-like_C_dom"/>
</dbReference>
<dbReference type="InterPro" id="IPR036676">
    <property type="entry name" value="PurM-like_C_sf"/>
</dbReference>
<dbReference type="InterPro" id="IPR036921">
    <property type="entry name" value="PurM-like_N_sf"/>
</dbReference>
<dbReference type="InterPro" id="IPR036604">
    <property type="entry name" value="PurS-like_sf"/>
</dbReference>
<dbReference type="NCBIfam" id="TIGR01735">
    <property type="entry name" value="FGAM_synt"/>
    <property type="match status" value="1"/>
</dbReference>
<dbReference type="NCBIfam" id="NF003672">
    <property type="entry name" value="PRK05297.1"/>
    <property type="match status" value="1"/>
</dbReference>
<dbReference type="PANTHER" id="PTHR10099">
    <property type="entry name" value="PHOSPHORIBOSYLFORMYLGLYCINAMIDINE SYNTHASE"/>
    <property type="match status" value="1"/>
</dbReference>
<dbReference type="PANTHER" id="PTHR10099:SF1">
    <property type="entry name" value="PHOSPHORIBOSYLFORMYLGLYCINAMIDINE SYNTHASE"/>
    <property type="match status" value="1"/>
</dbReference>
<dbReference type="Pfam" id="PF02769">
    <property type="entry name" value="AIRS_C"/>
    <property type="match status" value="2"/>
</dbReference>
<dbReference type="Pfam" id="PF18072">
    <property type="entry name" value="FGAR-AT_linker"/>
    <property type="match status" value="1"/>
</dbReference>
<dbReference type="Pfam" id="PF18076">
    <property type="entry name" value="FGAR-AT_N"/>
    <property type="match status" value="1"/>
</dbReference>
<dbReference type="Pfam" id="PF22689">
    <property type="entry name" value="FGAR-AT_PurM_N-like"/>
    <property type="match status" value="1"/>
</dbReference>
<dbReference type="Pfam" id="PF13507">
    <property type="entry name" value="GATase_5"/>
    <property type="match status" value="1"/>
</dbReference>
<dbReference type="SMART" id="SM01211">
    <property type="entry name" value="GATase_5"/>
    <property type="match status" value="1"/>
</dbReference>
<dbReference type="SUPFAM" id="SSF52317">
    <property type="entry name" value="Class I glutamine amidotransferase-like"/>
    <property type="match status" value="1"/>
</dbReference>
<dbReference type="SUPFAM" id="SSF109736">
    <property type="entry name" value="FGAM synthase PurL, linker domain"/>
    <property type="match status" value="1"/>
</dbReference>
<dbReference type="SUPFAM" id="SSF56042">
    <property type="entry name" value="PurM C-terminal domain-like"/>
    <property type="match status" value="2"/>
</dbReference>
<dbReference type="SUPFAM" id="SSF55326">
    <property type="entry name" value="PurM N-terminal domain-like"/>
    <property type="match status" value="2"/>
</dbReference>
<dbReference type="SUPFAM" id="SSF82697">
    <property type="entry name" value="PurS-like"/>
    <property type="match status" value="1"/>
</dbReference>
<dbReference type="PROSITE" id="PS51273">
    <property type="entry name" value="GATASE_TYPE_1"/>
    <property type="match status" value="1"/>
</dbReference>
<sequence length="1296" mass="142048">MEILRGSPALSAFRITKLLSRCQDAHLLVSDIYAEYVHFADVSAPLSADEHARLQRLLQYGPSLPEHPPAGRLLLVTPRPGTISPWSSKATDIAHNCGLSQILRLERGLAFSIQGPDLNESQWKQLAALLHDRMMEAVFTDLQQAEQLFSHHQPAPVQRVDILGQGRSALEQANIKLGLALAQDEIDYLLTAFTGLGRNPTDIELYMFAQANSEHCRHKIFNADWVIDGVVQPKTLFKMIKNTFEHTPDYVLSAYKDNAAVMEGSQVGRFYATAEKGIYDYHQEEAHILMKVETHNHPTAISPWPGAATGSGGEIRDEGATGRGAKPKAGLVGFSVSNLRIPGFEQPWEENFGKPDRIVTALDIMTEGPLGGAAFNNEFGRPALLGYFRTYEERVNSHNGIELRGYHKPIMLAGGLGNIRADHVQKGEITVGAKLVVLGGPSMNIGLGGGAASSMASGQSDADLDFASVQRDNPEMERRCQEVIDRCWQLGEYNPILFIHDVGAGGLSNAMPELVNDGGRGGRFELRDILNDEPGMSPLEVWCNESQERYVLAVAPAQMALFDEICRRERAPYAVIGEATEEKHLLLNDRHFGNQPIDMPLDVLLGKTPKMLRDVTRLQAKGDALQRADISLAEAVKRIMHLPAVAEKTFLITIGDRTVTGMVTRDQMVGPWQIPVADCAVTSASLDSYYGEAMSLGERAPVALLDFAASARLAVGEALTNIAATQIGELKRIKLSANWMSAAGHPGEDAGLYDAVRAVGEELCPALEITIPVGKDSMSMKTRWQEGHEQREMTSPLSLVITAFARIEDVRRTVTPQLRTDKGDNALLLIDLGAGHNALGATALTQVYRQLGDKPADVRNVQQLAGFFNAMQRLVADQHLLAYHDRSDGGLLVTLAEMAFAGHCGVTVDIQSLGNDALAALFNEELGAVIQVRAEQRADVEKLLADHGLANCVHYLGRAVAGDTFDIRSGTDVVYSEKRSTLRLWWAETSWQMQRLRDNPDCADQEHQAKQDESDPGLNVKLTFDPAEDIAAPFILKQARPKVAVLREQGVNSHVEMAAAFHRAGFDAVDVHMSDLLAGRTDLQSFQTLVACGGFSYGDVLGAGEGWAKSILFNDRVRDEFEAFFHRPTTLALGVCNGCQMMSNLRELIPGAEHWPRFVRNLSDSFEARFSLVEVASSPSLFMQDMVGSRMPIAVSHGEGQVEVRDAAHLAALEQSHLVALRFVNNHGVVTEQYPANPNGSANGITAVTSVSGRATVMMPHPERVFRTVSNSWHPEEWGEDSPWMRMFRNARKQLG</sequence>